<accession>P0A2V9</accession>
<accession>Q8DN61</accession>
<accession>Q9X4T3</accession>
<sequence>MGTFSVRHLDLFYGDFQALKNISIQLPERQITALIGPSGCGKSTFLKTLNRMNDLVPSCHIEGQVLLDEQDIYSSKFNLNQLRKRVGMVFQQPNPFAMSIYDNVAYGPRTHGIRDKKQLDALVEKSLKGAAIWEEVKDDLKKSAMSLSGGQQQRLCIARALAVEPDILLMDEPTSALDPISTLKIEDLIQQLKKDYTIIIVTHNMQQASRISDKTAFFLTGEICEFGDTVDVFTNPKDQRTEDYISGRFG</sequence>
<evidence type="ECO:0000255" key="1">
    <source>
        <dbReference type="HAMAP-Rule" id="MF_01702"/>
    </source>
</evidence>
<feature type="chain" id="PRO_0000092902" description="Phosphate import ATP-binding protein PstB 3">
    <location>
        <begin position="1"/>
        <end position="250"/>
    </location>
</feature>
<feature type="domain" description="ABC transporter" evidence="1">
    <location>
        <begin position="4"/>
        <end position="245"/>
    </location>
</feature>
<feature type="binding site" evidence="1">
    <location>
        <begin position="36"/>
        <end position="43"/>
    </location>
    <ligand>
        <name>ATP</name>
        <dbReference type="ChEBI" id="CHEBI:30616"/>
    </ligand>
</feature>
<keyword id="KW-0067">ATP-binding</keyword>
<keyword id="KW-1003">Cell membrane</keyword>
<keyword id="KW-0472">Membrane</keyword>
<keyword id="KW-0547">Nucleotide-binding</keyword>
<keyword id="KW-0592">Phosphate transport</keyword>
<keyword id="KW-1185">Reference proteome</keyword>
<keyword id="KW-1278">Translocase</keyword>
<keyword id="KW-0813">Transport</keyword>
<protein>
    <recommendedName>
        <fullName evidence="1">Phosphate import ATP-binding protein PstB 3</fullName>
        <ecNumber evidence="1">7.3.2.1</ecNumber>
    </recommendedName>
    <alternativeName>
        <fullName evidence="1">ABC phosphate transporter 3</fullName>
    </alternativeName>
    <alternativeName>
        <fullName evidence="1">Phosphate-transporting ATPase 3</fullName>
    </alternativeName>
</protein>
<dbReference type="EC" id="7.3.2.1" evidence="1"/>
<dbReference type="EMBL" id="AF118229">
    <property type="protein sequence ID" value="AAD22041.1"/>
    <property type="molecule type" value="Genomic_DNA"/>
</dbReference>
<dbReference type="EMBL" id="AE007317">
    <property type="protein sequence ID" value="AAL00700.1"/>
    <property type="molecule type" value="Genomic_DNA"/>
</dbReference>
<dbReference type="PIR" id="G98108">
    <property type="entry name" value="G98108"/>
</dbReference>
<dbReference type="RefSeq" id="NP_359489.1">
    <property type="nucleotide sequence ID" value="NC_003098.1"/>
</dbReference>
<dbReference type="SMR" id="P0A2V9"/>
<dbReference type="STRING" id="171101.spr1898"/>
<dbReference type="KEGG" id="spr:spr1898"/>
<dbReference type="PATRIC" id="fig|171101.6.peg.2047"/>
<dbReference type="eggNOG" id="COG1117">
    <property type="taxonomic scope" value="Bacteria"/>
</dbReference>
<dbReference type="HOGENOM" id="CLU_000604_1_22_9"/>
<dbReference type="Proteomes" id="UP000000586">
    <property type="component" value="Chromosome"/>
</dbReference>
<dbReference type="GO" id="GO:0005886">
    <property type="term" value="C:plasma membrane"/>
    <property type="evidence" value="ECO:0007669"/>
    <property type="project" value="UniProtKB-SubCell"/>
</dbReference>
<dbReference type="GO" id="GO:0005524">
    <property type="term" value="F:ATP binding"/>
    <property type="evidence" value="ECO:0007669"/>
    <property type="project" value="UniProtKB-KW"/>
</dbReference>
<dbReference type="GO" id="GO:0016887">
    <property type="term" value="F:ATP hydrolysis activity"/>
    <property type="evidence" value="ECO:0007669"/>
    <property type="project" value="InterPro"/>
</dbReference>
<dbReference type="GO" id="GO:0015415">
    <property type="term" value="F:ATPase-coupled phosphate ion transmembrane transporter activity"/>
    <property type="evidence" value="ECO:0007669"/>
    <property type="project" value="UniProtKB-EC"/>
</dbReference>
<dbReference type="GO" id="GO:0035435">
    <property type="term" value="P:phosphate ion transmembrane transport"/>
    <property type="evidence" value="ECO:0007669"/>
    <property type="project" value="InterPro"/>
</dbReference>
<dbReference type="CDD" id="cd03260">
    <property type="entry name" value="ABC_PstB_phosphate_transporter"/>
    <property type="match status" value="1"/>
</dbReference>
<dbReference type="FunFam" id="3.40.50.300:FF:000132">
    <property type="entry name" value="Phosphate import ATP-binding protein PstB"/>
    <property type="match status" value="1"/>
</dbReference>
<dbReference type="Gene3D" id="3.40.50.300">
    <property type="entry name" value="P-loop containing nucleotide triphosphate hydrolases"/>
    <property type="match status" value="1"/>
</dbReference>
<dbReference type="InterPro" id="IPR003593">
    <property type="entry name" value="AAA+_ATPase"/>
</dbReference>
<dbReference type="InterPro" id="IPR003439">
    <property type="entry name" value="ABC_transporter-like_ATP-bd"/>
</dbReference>
<dbReference type="InterPro" id="IPR017871">
    <property type="entry name" value="ABC_transporter-like_CS"/>
</dbReference>
<dbReference type="InterPro" id="IPR027417">
    <property type="entry name" value="P-loop_NTPase"/>
</dbReference>
<dbReference type="InterPro" id="IPR005670">
    <property type="entry name" value="PstB-like"/>
</dbReference>
<dbReference type="NCBIfam" id="TIGR00972">
    <property type="entry name" value="3a0107s01c2"/>
    <property type="match status" value="1"/>
</dbReference>
<dbReference type="PANTHER" id="PTHR43423">
    <property type="entry name" value="ABC TRANSPORTER I FAMILY MEMBER 17"/>
    <property type="match status" value="1"/>
</dbReference>
<dbReference type="PANTHER" id="PTHR43423:SF1">
    <property type="entry name" value="ABC TRANSPORTER I FAMILY MEMBER 17"/>
    <property type="match status" value="1"/>
</dbReference>
<dbReference type="Pfam" id="PF00005">
    <property type="entry name" value="ABC_tran"/>
    <property type="match status" value="1"/>
</dbReference>
<dbReference type="SMART" id="SM00382">
    <property type="entry name" value="AAA"/>
    <property type="match status" value="1"/>
</dbReference>
<dbReference type="SUPFAM" id="SSF52540">
    <property type="entry name" value="P-loop containing nucleoside triphosphate hydrolases"/>
    <property type="match status" value="1"/>
</dbReference>
<dbReference type="PROSITE" id="PS00211">
    <property type="entry name" value="ABC_TRANSPORTER_1"/>
    <property type="match status" value="1"/>
</dbReference>
<dbReference type="PROSITE" id="PS50893">
    <property type="entry name" value="ABC_TRANSPORTER_2"/>
    <property type="match status" value="1"/>
</dbReference>
<dbReference type="PROSITE" id="PS51238">
    <property type="entry name" value="PSTB"/>
    <property type="match status" value="1"/>
</dbReference>
<reference key="1">
    <citation type="journal article" date="1999" name="J. Bacteriol.">
        <title>Identification of a Streptococcus pneumoniae gene locus encoding proteins of an ABC phosphate transporter and a two-component regulatory system.</title>
        <authorList>
            <person name="Novak R."/>
            <person name="Cauwels A."/>
            <person name="Charpentier E."/>
            <person name="Tuomanen E."/>
        </authorList>
    </citation>
    <scope>NUCLEOTIDE SEQUENCE [GENOMIC DNA]</scope>
    <scope>CHARACTERIZATION</scope>
</reference>
<reference key="2">
    <citation type="journal article" date="2001" name="J. Bacteriol.">
        <title>Genome of the bacterium Streptococcus pneumoniae strain R6.</title>
        <authorList>
            <person name="Hoskins J."/>
            <person name="Alborn W.E. Jr."/>
            <person name="Arnold J."/>
            <person name="Blaszczak L.C."/>
            <person name="Burgett S."/>
            <person name="DeHoff B.S."/>
            <person name="Estrem S.T."/>
            <person name="Fritz L."/>
            <person name="Fu D.-J."/>
            <person name="Fuller W."/>
            <person name="Geringer C."/>
            <person name="Gilmour R."/>
            <person name="Glass J.S."/>
            <person name="Khoja H."/>
            <person name="Kraft A.R."/>
            <person name="Lagace R.E."/>
            <person name="LeBlanc D.J."/>
            <person name="Lee L.N."/>
            <person name="Lefkowitz E.J."/>
            <person name="Lu J."/>
            <person name="Matsushima P."/>
            <person name="McAhren S.M."/>
            <person name="McHenney M."/>
            <person name="McLeaster K."/>
            <person name="Mundy C.W."/>
            <person name="Nicas T.I."/>
            <person name="Norris F.H."/>
            <person name="O'Gara M."/>
            <person name="Peery R.B."/>
            <person name="Robertson G.T."/>
            <person name="Rockey P."/>
            <person name="Sun P.-M."/>
            <person name="Winkler M.E."/>
            <person name="Yang Y."/>
            <person name="Young-Bellido M."/>
            <person name="Zhao G."/>
            <person name="Zook C.A."/>
            <person name="Baltz R.H."/>
            <person name="Jaskunas S.R."/>
            <person name="Rosteck P.R. Jr."/>
            <person name="Skatrud P.L."/>
            <person name="Glass J.I."/>
        </authorList>
    </citation>
    <scope>NUCLEOTIDE SEQUENCE [LARGE SCALE GENOMIC DNA]</scope>
    <source>
        <strain>ATCC BAA-255 / R6</strain>
    </source>
</reference>
<proteinExistence type="evidence at protein level"/>
<name>PSTB3_STRR6</name>
<organism>
    <name type="scientific">Streptococcus pneumoniae (strain ATCC BAA-255 / R6)</name>
    <dbReference type="NCBI Taxonomy" id="171101"/>
    <lineage>
        <taxon>Bacteria</taxon>
        <taxon>Bacillati</taxon>
        <taxon>Bacillota</taxon>
        <taxon>Bacilli</taxon>
        <taxon>Lactobacillales</taxon>
        <taxon>Streptococcaceae</taxon>
        <taxon>Streptococcus</taxon>
    </lineage>
</organism>
<gene>
    <name evidence="1" type="primary">pstB3</name>
    <name type="ordered locus">spr1898</name>
</gene>
<comment type="function">
    <text>Part of the ABC transporter complex PstSACB involved in phosphate import. Responsible for energy coupling to the transport system.</text>
</comment>
<comment type="catalytic activity">
    <reaction evidence="1">
        <text>phosphate(out) + ATP + H2O = ADP + 2 phosphate(in) + H(+)</text>
        <dbReference type="Rhea" id="RHEA:24440"/>
        <dbReference type="ChEBI" id="CHEBI:15377"/>
        <dbReference type="ChEBI" id="CHEBI:15378"/>
        <dbReference type="ChEBI" id="CHEBI:30616"/>
        <dbReference type="ChEBI" id="CHEBI:43474"/>
        <dbReference type="ChEBI" id="CHEBI:456216"/>
        <dbReference type="EC" id="7.3.2.1"/>
    </reaction>
</comment>
<comment type="subunit">
    <text evidence="1">The complex is composed of two ATP-binding proteins (PstB), two transmembrane proteins (PstC and PstA) and a solute-binding protein (PstS).</text>
</comment>
<comment type="subcellular location">
    <subcellularLocation>
        <location evidence="1">Cell membrane</location>
        <topology evidence="1">Peripheral membrane protein</topology>
    </subcellularLocation>
</comment>
<comment type="similarity">
    <text evidence="1">Belongs to the ABC transporter superfamily. Phosphate importer (TC 3.A.1.7) family.</text>
</comment>